<dbReference type="EMBL" id="BA000037">
    <property type="protein sequence ID" value="BAC95118.1"/>
    <property type="molecule type" value="Genomic_DNA"/>
</dbReference>
<dbReference type="RefSeq" id="WP_011079973.1">
    <property type="nucleotide sequence ID" value="NC_005139.1"/>
</dbReference>
<dbReference type="SMR" id="Q7MJ09"/>
<dbReference type="STRING" id="672.VV93_v1c20640"/>
<dbReference type="KEGG" id="vvy:VV2354"/>
<dbReference type="eggNOG" id="COG2835">
    <property type="taxonomic scope" value="Bacteria"/>
</dbReference>
<dbReference type="HOGENOM" id="CLU_155659_3_1_6"/>
<dbReference type="Proteomes" id="UP000002675">
    <property type="component" value="Chromosome I"/>
</dbReference>
<dbReference type="GO" id="GO:0005829">
    <property type="term" value="C:cytosol"/>
    <property type="evidence" value="ECO:0007669"/>
    <property type="project" value="TreeGrafter"/>
</dbReference>
<dbReference type="FunFam" id="2.20.25.10:FF:000002">
    <property type="entry name" value="UPF0434 protein YcaR"/>
    <property type="match status" value="1"/>
</dbReference>
<dbReference type="Gene3D" id="2.20.25.10">
    <property type="match status" value="1"/>
</dbReference>
<dbReference type="HAMAP" id="MF_01187">
    <property type="entry name" value="UPF0434"/>
    <property type="match status" value="1"/>
</dbReference>
<dbReference type="InterPro" id="IPR005651">
    <property type="entry name" value="Trm112-like"/>
</dbReference>
<dbReference type="PANTHER" id="PTHR33505:SF4">
    <property type="entry name" value="PROTEIN PREY, MITOCHONDRIAL"/>
    <property type="match status" value="1"/>
</dbReference>
<dbReference type="PANTHER" id="PTHR33505">
    <property type="entry name" value="ZGC:162634"/>
    <property type="match status" value="1"/>
</dbReference>
<dbReference type="Pfam" id="PF03966">
    <property type="entry name" value="Trm112p"/>
    <property type="match status" value="1"/>
</dbReference>
<dbReference type="SUPFAM" id="SSF158997">
    <property type="entry name" value="Trm112p-like"/>
    <property type="match status" value="1"/>
</dbReference>
<gene>
    <name type="ordered locus">VV2354</name>
</gene>
<sequence length="59" mass="6714">MDHRLLEIVACPVCKGKLTFDKENQELICKLDRLAYPIKEGIPVLLEPEARSMGMDEGR</sequence>
<organism>
    <name type="scientific">Vibrio vulnificus (strain YJ016)</name>
    <dbReference type="NCBI Taxonomy" id="196600"/>
    <lineage>
        <taxon>Bacteria</taxon>
        <taxon>Pseudomonadati</taxon>
        <taxon>Pseudomonadota</taxon>
        <taxon>Gammaproteobacteria</taxon>
        <taxon>Vibrionales</taxon>
        <taxon>Vibrionaceae</taxon>
        <taxon>Vibrio</taxon>
    </lineage>
</organism>
<reference key="1">
    <citation type="journal article" date="2003" name="Genome Res.">
        <title>Comparative genome analysis of Vibrio vulnificus, a marine pathogen.</title>
        <authorList>
            <person name="Chen C.-Y."/>
            <person name="Wu K.-M."/>
            <person name="Chang Y.-C."/>
            <person name="Chang C.-H."/>
            <person name="Tsai H.-C."/>
            <person name="Liao T.-L."/>
            <person name="Liu Y.-M."/>
            <person name="Chen H.-J."/>
            <person name="Shen A.B.-T."/>
            <person name="Li J.-C."/>
            <person name="Su T.-L."/>
            <person name="Shao C.-P."/>
            <person name="Lee C.-T."/>
            <person name="Hor L.-I."/>
            <person name="Tsai S.-F."/>
        </authorList>
    </citation>
    <scope>NUCLEOTIDE SEQUENCE [LARGE SCALE GENOMIC DNA]</scope>
    <source>
        <strain>YJ016</strain>
    </source>
</reference>
<accession>Q7MJ09</accession>
<proteinExistence type="inferred from homology"/>
<evidence type="ECO:0000255" key="1">
    <source>
        <dbReference type="HAMAP-Rule" id="MF_01187"/>
    </source>
</evidence>
<comment type="similarity">
    <text evidence="1">Belongs to the UPF0434 family.</text>
</comment>
<feature type="chain" id="PRO_0000291183" description="UPF0434 protein VV2354">
    <location>
        <begin position="1"/>
        <end position="59"/>
    </location>
</feature>
<protein>
    <recommendedName>
        <fullName evidence="1">UPF0434 protein VV2354</fullName>
    </recommendedName>
</protein>
<name>Y2354_VIBVY</name>